<evidence type="ECO:0000250" key="1">
    <source>
        <dbReference type="UniProtKB" id="P42628"/>
    </source>
</evidence>
<evidence type="ECO:0000255" key="2"/>
<evidence type="ECO:0000269" key="3">
    <source>
    </source>
</evidence>
<evidence type="ECO:0000303" key="4">
    <source>
    </source>
</evidence>
<evidence type="ECO:0000305" key="5"/>
<evidence type="ECO:0000305" key="6">
    <source>
    </source>
</evidence>
<name>DLST_ECO57</name>
<organism>
    <name type="scientific">Escherichia coli O157:H7</name>
    <dbReference type="NCBI Taxonomy" id="83334"/>
    <lineage>
        <taxon>Bacteria</taxon>
        <taxon>Pseudomonadati</taxon>
        <taxon>Pseudomonadota</taxon>
        <taxon>Gammaproteobacteria</taxon>
        <taxon>Enterobacterales</taxon>
        <taxon>Enterobacteriaceae</taxon>
        <taxon>Escherichia</taxon>
    </lineage>
</organism>
<keyword id="KW-0029">Amino-acid transport</keyword>
<keyword id="KW-0997">Cell inner membrane</keyword>
<keyword id="KW-1003">Cell membrane</keyword>
<keyword id="KW-0472">Membrane</keyword>
<keyword id="KW-1185">Reference proteome</keyword>
<keyword id="KW-0812">Transmembrane</keyword>
<keyword id="KW-1133">Transmembrane helix</keyword>
<keyword id="KW-0813">Transport</keyword>
<keyword id="KW-0843">Virulence</keyword>
<accession>Q8XAF5</accession>
<accession>Q7AAM0</accession>
<comment type="function">
    <text evidence="1 3">Transports both D- and L-serine; allows growth of strain CFT073 cells normally unable to transport D-serine on that substrate. Transport relies on the H(+) gradient and is not competed by L-threonine (PubMed:26727373). May play a role in L-cysteine detoxification (By similarity).</text>
</comment>
<comment type="biophysicochemical properties">
    <kinetics>
        <KM evidence="3">65.56 uM for D-serine</KM>
        <Vmax evidence="3">30.2 nmol/min/mg enzyme</Vmax>
    </kinetics>
</comment>
<comment type="subcellular location">
    <subcellularLocation>
        <location evidence="1 2 6">Cell inner membrane</location>
        <topology evidence="2">Multi-pass membrane protein</topology>
    </subcellularLocation>
</comment>
<comment type="induction">
    <text evidence="3">40-fold induced under conditions that maximally induce expression of the locus of effacement (LEE) large pathogenicity island (PAI); part of the dlsT-yhaM operon. 3-fold induced by D-serine during mid to late exponential growth.</text>
</comment>
<comment type="disruption phenotype">
    <text evidence="3">Decreased secretion of a number of substrates for the type III secretion system (T3SS) encoded in the locus of effacement (LEE) including Tir, EspA and EspD; at least EspD is also decreased intracellularly. Expression of 105 genes is altered; down-regulation of LEE PAI (including the T3SS) plus other genes as well as up-regulation of 21 genes. Decreased ability to form attachment/effacing lesions on HeLa cells; those which form attachments condense host actin less well (pedestal formation) (PubMed:26727373).</text>
</comment>
<comment type="similarity">
    <text evidence="5">Belongs to the amino acid/polyamine transporter 2 family. SdaC/TdcC subfamily.</text>
</comment>
<proteinExistence type="evidence at protein level"/>
<protein>
    <recommendedName>
        <fullName>Serine transporter</fullName>
    </recommendedName>
</protein>
<reference key="1">
    <citation type="journal article" date="2001" name="Nature">
        <title>Genome sequence of enterohaemorrhagic Escherichia coli O157:H7.</title>
        <authorList>
            <person name="Perna N.T."/>
            <person name="Plunkett G. III"/>
            <person name="Burland V."/>
            <person name="Mau B."/>
            <person name="Glasner J.D."/>
            <person name="Rose D.J."/>
            <person name="Mayhew G.F."/>
            <person name="Evans P.S."/>
            <person name="Gregor J."/>
            <person name="Kirkpatrick H.A."/>
            <person name="Posfai G."/>
            <person name="Hackett J."/>
            <person name="Klink S."/>
            <person name="Boutin A."/>
            <person name="Shao Y."/>
            <person name="Miller L."/>
            <person name="Grotbeck E.J."/>
            <person name="Davis N.W."/>
            <person name="Lim A."/>
            <person name="Dimalanta E.T."/>
            <person name="Potamousis K."/>
            <person name="Apodaca J."/>
            <person name="Anantharaman T.S."/>
            <person name="Lin J."/>
            <person name="Yen G."/>
            <person name="Schwartz D.C."/>
            <person name="Welch R.A."/>
            <person name="Blattner F.R."/>
        </authorList>
    </citation>
    <scope>NUCLEOTIDE SEQUENCE [LARGE SCALE GENOMIC DNA]</scope>
    <source>
        <strain>O157:H7 / EDL933 / ATCC 700927 / EHEC</strain>
    </source>
</reference>
<reference key="2">
    <citation type="journal article" date="2001" name="DNA Res.">
        <title>Complete genome sequence of enterohemorrhagic Escherichia coli O157:H7 and genomic comparison with a laboratory strain K-12.</title>
        <authorList>
            <person name="Hayashi T."/>
            <person name="Makino K."/>
            <person name="Ohnishi M."/>
            <person name="Kurokawa K."/>
            <person name="Ishii K."/>
            <person name="Yokoyama K."/>
            <person name="Han C.-G."/>
            <person name="Ohtsubo E."/>
            <person name="Nakayama K."/>
            <person name="Murata T."/>
            <person name="Tanaka M."/>
            <person name="Tobe T."/>
            <person name="Iida T."/>
            <person name="Takami H."/>
            <person name="Honda T."/>
            <person name="Sasakawa C."/>
            <person name="Ogasawara N."/>
            <person name="Yasunaga T."/>
            <person name="Kuhara S."/>
            <person name="Shiba T."/>
            <person name="Hattori M."/>
            <person name="Shinagawa H."/>
        </authorList>
    </citation>
    <scope>NUCLEOTIDE SEQUENCE [LARGE SCALE GENOMIC DNA]</scope>
    <source>
        <strain>O157:H7 / Sakai / RIMD 0509952 / EHEC</strain>
    </source>
</reference>
<reference key="3">
    <citation type="journal article" date="2016" name="PLoS Pathog.">
        <title>A highly conserved bacterial D-serine uptake system links host metabolism and virulence.</title>
        <authorList>
            <person name="Connolly J.P."/>
            <person name="Gabrielsen M."/>
            <person name="Goldstone R.J."/>
            <person name="Grinter R."/>
            <person name="Wang D."/>
            <person name="Cogdell R.J."/>
            <person name="Walker D."/>
            <person name="Smith D.G."/>
            <person name="Roe A.J."/>
        </authorList>
    </citation>
    <scope>FUNCTION IN D-SERINE TRANSPORT</scope>
    <scope>FUNCTION IN VIRULENCE</scope>
    <scope>BIOPHYSICOCHEMICAL PROPERTIES</scope>
    <scope>INDUCTION</scope>
    <scope>DISRUPTION PHENOTYPE</scope>
    <source>
        <strain>O157:H7 / EDL933 / ATCC 700927 / EHEC</strain>
    </source>
</reference>
<sequence length="443" mass="48323">MEIASNKGVIADASTPAGRAGMSESEWREAIKFDSTDTGWVIMSIGMAIGAGIVFLPVQVGLMGLWVFLLSSVIGYPAMYLFQRLFINTLAESPECKDYPSVISGYLGKNWGILLGALYFVMLVIWMFVYSTAITNDSASYLHTFGVTEGLLSDSPFYGLVLICILVAISSRGEKLLFKISTGMVLTKLLVVAALGVSMVGMWHLYNVGSLPPLGLLVKNAIITLPFTLTSILFIQTLSPMVISYRSREKSIEVARHKALRAMNIAFGILFIIVFFYAVSFTLAMGHDEAVKAYEQNISALAIAAQFISGDGAAWVKVVSVILNIFAVMTAFFGVYLGFREATQGIVMNILRRKMPAEKINENLVQRGIMIFAILLAWSAIVLNAPVLSFTSICSPIFGLVGCLIPAWLVYKVPALHKYKGMSLYLIIVTGLLLCVSPFLAFS</sequence>
<feature type="chain" id="PRO_0000437257" description="Serine transporter">
    <location>
        <begin position="1"/>
        <end position="443"/>
    </location>
</feature>
<feature type="transmembrane region" description="Helical" evidence="2">
    <location>
        <begin position="38"/>
        <end position="60"/>
    </location>
</feature>
<feature type="transmembrane region" description="Helical" evidence="2">
    <location>
        <begin position="65"/>
        <end position="87"/>
    </location>
</feature>
<feature type="transmembrane region" description="Helical" evidence="2">
    <location>
        <begin position="111"/>
        <end position="131"/>
    </location>
</feature>
<feature type="transmembrane region" description="Helical" evidence="2">
    <location>
        <begin position="150"/>
        <end position="170"/>
    </location>
</feature>
<feature type="transmembrane region" description="Helical" evidence="2">
    <location>
        <begin position="183"/>
        <end position="203"/>
    </location>
</feature>
<feature type="transmembrane region" description="Helical" evidence="2">
    <location>
        <begin position="215"/>
        <end position="235"/>
    </location>
</feature>
<feature type="transmembrane region" description="Helical" evidence="2">
    <location>
        <begin position="265"/>
        <end position="285"/>
    </location>
</feature>
<feature type="transmembrane region" description="Helical" evidence="2">
    <location>
        <begin position="319"/>
        <end position="339"/>
    </location>
</feature>
<feature type="transmembrane region" description="Helical" evidence="2">
    <location>
        <begin position="368"/>
        <end position="388"/>
    </location>
</feature>
<feature type="transmembrane region" description="Helical" evidence="2">
    <location>
        <begin position="390"/>
        <end position="410"/>
    </location>
</feature>
<feature type="transmembrane region" description="Helical" evidence="2">
    <location>
        <begin position="422"/>
        <end position="442"/>
    </location>
</feature>
<dbReference type="EMBL" id="AE005174">
    <property type="protein sequence ID" value="AAG58242.1"/>
    <property type="molecule type" value="Genomic_DNA"/>
</dbReference>
<dbReference type="EMBL" id="BA000007">
    <property type="protein sequence ID" value="BAB37414.1"/>
    <property type="molecule type" value="Genomic_DNA"/>
</dbReference>
<dbReference type="PIR" id="F85972">
    <property type="entry name" value="F85972"/>
</dbReference>
<dbReference type="PIR" id="G91127">
    <property type="entry name" value="G91127"/>
</dbReference>
<dbReference type="RefSeq" id="NP_312018.1">
    <property type="nucleotide sequence ID" value="NC_002695.1"/>
</dbReference>
<dbReference type="RefSeq" id="WP_000401586.1">
    <property type="nucleotide sequence ID" value="NZ_VOAI01000009.1"/>
</dbReference>
<dbReference type="SMR" id="Q8XAF5"/>
<dbReference type="STRING" id="155864.Z4463"/>
<dbReference type="GeneID" id="916166"/>
<dbReference type="KEGG" id="ece:Z4463"/>
<dbReference type="KEGG" id="ecs:ECs_3991"/>
<dbReference type="PATRIC" id="fig|386585.9.peg.4165"/>
<dbReference type="eggNOG" id="COG0814">
    <property type="taxonomic scope" value="Bacteria"/>
</dbReference>
<dbReference type="HOGENOM" id="CLU_052043_3_0_6"/>
<dbReference type="OMA" id="QRGIMLF"/>
<dbReference type="Proteomes" id="UP000000558">
    <property type="component" value="Chromosome"/>
</dbReference>
<dbReference type="Proteomes" id="UP000002519">
    <property type="component" value="Chromosome"/>
</dbReference>
<dbReference type="GO" id="GO:0005886">
    <property type="term" value="C:plasma membrane"/>
    <property type="evidence" value="ECO:0007669"/>
    <property type="project" value="UniProtKB-SubCell"/>
</dbReference>
<dbReference type="GO" id="GO:0042942">
    <property type="term" value="P:D-serine transmembrane transport"/>
    <property type="evidence" value="ECO:0000314"/>
    <property type="project" value="UniProtKB"/>
</dbReference>
<dbReference type="GO" id="GO:0032329">
    <property type="term" value="P:serine transport"/>
    <property type="evidence" value="ECO:0000314"/>
    <property type="project" value="UniProtKB"/>
</dbReference>
<dbReference type="FunFam" id="1.20.1740.10:FF:000016">
    <property type="entry name" value="Inner membrane transporter YhaO"/>
    <property type="match status" value="1"/>
</dbReference>
<dbReference type="Gene3D" id="1.20.1740.10">
    <property type="entry name" value="Amino acid/polyamine transporter I"/>
    <property type="match status" value="1"/>
</dbReference>
<dbReference type="InterPro" id="IPR018227">
    <property type="entry name" value="Amino_acid_transport_2"/>
</dbReference>
<dbReference type="PANTHER" id="PTHR35334">
    <property type="entry name" value="SERINE TRANSPORTER"/>
    <property type="match status" value="1"/>
</dbReference>
<dbReference type="PANTHER" id="PTHR35334:SF4">
    <property type="entry name" value="SERINE TRANSPORTER-RELATED"/>
    <property type="match status" value="1"/>
</dbReference>
<gene>
    <name evidence="4" type="primary">dlsT</name>
    <name type="synonym">yhaO</name>
    <name type="ordered locus">ECs3991</name>
    <name type="ordered locus">Z4463</name>
</gene>